<protein>
    <recommendedName>
        <fullName evidence="1">DNA gyrase inhibitor YacG</fullName>
    </recommendedName>
</protein>
<organism>
    <name type="scientific">Escherichia coli (strain ATCC 8739 / DSM 1576 / NBRC 3972 / NCIMB 8545 / WDCM 00012 / Crooks)</name>
    <dbReference type="NCBI Taxonomy" id="481805"/>
    <lineage>
        <taxon>Bacteria</taxon>
        <taxon>Pseudomonadati</taxon>
        <taxon>Pseudomonadota</taxon>
        <taxon>Gammaproteobacteria</taxon>
        <taxon>Enterobacterales</taxon>
        <taxon>Enterobacteriaceae</taxon>
        <taxon>Escherichia</taxon>
    </lineage>
</organism>
<comment type="function">
    <text evidence="1">Inhibits all the catalytic activities of DNA gyrase by preventing its interaction with DNA. Acts by binding directly to the C-terminal domain of GyrB, which probably disrupts DNA binding by the gyrase.</text>
</comment>
<comment type="cofactor">
    <cofactor evidence="1">
        <name>Zn(2+)</name>
        <dbReference type="ChEBI" id="CHEBI:29105"/>
    </cofactor>
    <text evidence="1">Binds 1 zinc ion.</text>
</comment>
<comment type="subunit">
    <text evidence="1">Interacts with GyrB.</text>
</comment>
<comment type="similarity">
    <text evidence="1">Belongs to the DNA gyrase inhibitor YacG family.</text>
</comment>
<feature type="chain" id="PRO_1000082722" description="DNA gyrase inhibitor YacG">
    <location>
        <begin position="1"/>
        <end position="65"/>
    </location>
</feature>
<feature type="region of interest" description="Disordered" evidence="2">
    <location>
        <begin position="45"/>
        <end position="65"/>
    </location>
</feature>
<feature type="compositionally biased region" description="Acidic residues" evidence="2">
    <location>
        <begin position="54"/>
        <end position="65"/>
    </location>
</feature>
<feature type="binding site" evidence="1">
    <location>
        <position position="9"/>
    </location>
    <ligand>
        <name>Zn(2+)</name>
        <dbReference type="ChEBI" id="CHEBI:29105"/>
    </ligand>
</feature>
<feature type="binding site" evidence="1">
    <location>
        <position position="12"/>
    </location>
    <ligand>
        <name>Zn(2+)</name>
        <dbReference type="ChEBI" id="CHEBI:29105"/>
    </ligand>
</feature>
<feature type="binding site" evidence="1">
    <location>
        <position position="28"/>
    </location>
    <ligand>
        <name>Zn(2+)</name>
        <dbReference type="ChEBI" id="CHEBI:29105"/>
    </ligand>
</feature>
<feature type="binding site" evidence="1">
    <location>
        <position position="32"/>
    </location>
    <ligand>
        <name>Zn(2+)</name>
        <dbReference type="ChEBI" id="CHEBI:29105"/>
    </ligand>
</feature>
<name>YACG_ECOLC</name>
<reference key="1">
    <citation type="submission" date="2008-02" db="EMBL/GenBank/DDBJ databases">
        <title>Complete sequence of Escherichia coli C str. ATCC 8739.</title>
        <authorList>
            <person name="Copeland A."/>
            <person name="Lucas S."/>
            <person name="Lapidus A."/>
            <person name="Glavina del Rio T."/>
            <person name="Dalin E."/>
            <person name="Tice H."/>
            <person name="Bruce D."/>
            <person name="Goodwin L."/>
            <person name="Pitluck S."/>
            <person name="Kiss H."/>
            <person name="Brettin T."/>
            <person name="Detter J.C."/>
            <person name="Han C."/>
            <person name="Kuske C.R."/>
            <person name="Schmutz J."/>
            <person name="Larimer F."/>
            <person name="Land M."/>
            <person name="Hauser L."/>
            <person name="Kyrpides N."/>
            <person name="Mikhailova N."/>
            <person name="Ingram L."/>
            <person name="Richardson P."/>
        </authorList>
    </citation>
    <scope>NUCLEOTIDE SEQUENCE [LARGE SCALE GENOMIC DNA]</scope>
    <source>
        <strain>ATCC 8739 / DSM 1576 / NBRC 3972 / NCIMB 8545 / WDCM 00012 / Crooks</strain>
    </source>
</reference>
<accession>B1IR78</accession>
<evidence type="ECO:0000255" key="1">
    <source>
        <dbReference type="HAMAP-Rule" id="MF_00649"/>
    </source>
</evidence>
<evidence type="ECO:0000256" key="2">
    <source>
        <dbReference type="SAM" id="MobiDB-lite"/>
    </source>
</evidence>
<sequence>MSETITVNCPTCGKTVVWGEISPFRPFCSKRCQLIDLGEWAAEEKRIPSSGDLSESDDWSEEPKQ</sequence>
<keyword id="KW-0479">Metal-binding</keyword>
<keyword id="KW-0862">Zinc</keyword>
<gene>
    <name evidence="1" type="primary">yacG</name>
    <name type="ordered locus">EcolC_3557</name>
</gene>
<proteinExistence type="inferred from homology"/>
<dbReference type="EMBL" id="CP000946">
    <property type="protein sequence ID" value="ACA79171.1"/>
    <property type="molecule type" value="Genomic_DNA"/>
</dbReference>
<dbReference type="RefSeq" id="WP_000005042.1">
    <property type="nucleotide sequence ID" value="NZ_MTFT01000035.1"/>
</dbReference>
<dbReference type="SMR" id="B1IR78"/>
<dbReference type="GeneID" id="93777334"/>
<dbReference type="KEGG" id="ecl:EcolC_3557"/>
<dbReference type="HOGENOM" id="CLU_178280_3_1_6"/>
<dbReference type="GO" id="GO:0008657">
    <property type="term" value="F:DNA topoisomerase type II (double strand cut, ATP-hydrolyzing) inhibitor activity"/>
    <property type="evidence" value="ECO:0007669"/>
    <property type="project" value="UniProtKB-UniRule"/>
</dbReference>
<dbReference type="GO" id="GO:0008270">
    <property type="term" value="F:zinc ion binding"/>
    <property type="evidence" value="ECO:0007669"/>
    <property type="project" value="UniProtKB-UniRule"/>
</dbReference>
<dbReference type="GO" id="GO:0006355">
    <property type="term" value="P:regulation of DNA-templated transcription"/>
    <property type="evidence" value="ECO:0007669"/>
    <property type="project" value="InterPro"/>
</dbReference>
<dbReference type="FunFam" id="3.30.50.10:FF:000026">
    <property type="entry name" value="DNA gyrase inhibitor YacG"/>
    <property type="match status" value="1"/>
</dbReference>
<dbReference type="Gene3D" id="3.30.50.10">
    <property type="entry name" value="Erythroid Transcription Factor GATA-1, subunit A"/>
    <property type="match status" value="1"/>
</dbReference>
<dbReference type="HAMAP" id="MF_00649">
    <property type="entry name" value="DNA_gyrase_inhibitor_YacG"/>
    <property type="match status" value="1"/>
</dbReference>
<dbReference type="InterPro" id="IPR005584">
    <property type="entry name" value="DNA_gyrase_inhibitor_YacG"/>
</dbReference>
<dbReference type="InterPro" id="IPR013088">
    <property type="entry name" value="Znf_NHR/GATA"/>
</dbReference>
<dbReference type="NCBIfam" id="NF001638">
    <property type="entry name" value="PRK00418.1"/>
    <property type="match status" value="1"/>
</dbReference>
<dbReference type="PANTHER" id="PTHR36150">
    <property type="entry name" value="DNA GYRASE INHIBITOR YACG"/>
    <property type="match status" value="1"/>
</dbReference>
<dbReference type="PANTHER" id="PTHR36150:SF1">
    <property type="entry name" value="DNA GYRASE INHIBITOR YACG"/>
    <property type="match status" value="1"/>
</dbReference>
<dbReference type="Pfam" id="PF03884">
    <property type="entry name" value="YacG"/>
    <property type="match status" value="1"/>
</dbReference>
<dbReference type="SUPFAM" id="SSF57716">
    <property type="entry name" value="Glucocorticoid receptor-like (DNA-binding domain)"/>
    <property type="match status" value="1"/>
</dbReference>